<gene>
    <name evidence="2" type="primary">tal</name>
    <name type="ordered locus">NATL1_05761</name>
</gene>
<reference key="1">
    <citation type="journal article" date="2007" name="PLoS Genet.">
        <title>Patterns and implications of gene gain and loss in the evolution of Prochlorococcus.</title>
        <authorList>
            <person name="Kettler G.C."/>
            <person name="Martiny A.C."/>
            <person name="Huang K."/>
            <person name="Zucker J."/>
            <person name="Coleman M.L."/>
            <person name="Rodrigue S."/>
            <person name="Chen F."/>
            <person name="Lapidus A."/>
            <person name="Ferriera S."/>
            <person name="Johnson J."/>
            <person name="Steglich C."/>
            <person name="Church G.M."/>
            <person name="Richardson P."/>
            <person name="Chisholm S.W."/>
        </authorList>
    </citation>
    <scope>NUCLEOTIDE SEQUENCE [LARGE SCALE GENOMIC DNA]</scope>
    <source>
        <strain>NATL1A</strain>
    </source>
</reference>
<proteinExistence type="inferred from homology"/>
<organism>
    <name type="scientific">Prochlorococcus marinus (strain NATL1A)</name>
    <dbReference type="NCBI Taxonomy" id="167555"/>
    <lineage>
        <taxon>Bacteria</taxon>
        <taxon>Bacillati</taxon>
        <taxon>Cyanobacteriota</taxon>
        <taxon>Cyanophyceae</taxon>
        <taxon>Synechococcales</taxon>
        <taxon>Prochlorococcaceae</taxon>
        <taxon>Prochlorococcus</taxon>
    </lineage>
</organism>
<name>TAL_PROM1</name>
<sequence length="332" mass="36450">MESLLNQLSSMTVVVADTGDLEAIKKYHPRDATTNPSLILAAAQMPAYQSLIDQALTTSREMLGTSAAKVDVVKEALDELCVVFGKEILKLIPGRVSTEVDARLSFDTDATIEKARKIIAKYNADGISNDRVLIKIASTWEGIKAAEVLEKENIHCNLTLLFNFYQAVACAEAGVTLISPFVGRILDWYKSATGRDSYPATEDPGVVSVTKIFNYFKSNGYKTEVMGASFRNIEEITELAGCDLLTISPKLLQQLNETHTDLPIKLNAQKPLVIEEKIHLDQTSFELMMAGDKMATEKLDDGISGFSKAIDKLENQLNERLELIEGGVALTL</sequence>
<feature type="chain" id="PRO_1000014508" description="Transaldolase">
    <location>
        <begin position="1"/>
        <end position="332"/>
    </location>
</feature>
<feature type="active site" description="Schiff-base intermediate with substrate" evidence="2">
    <location>
        <position position="135"/>
    </location>
</feature>
<keyword id="KW-0963">Cytoplasm</keyword>
<keyword id="KW-0570">Pentose shunt</keyword>
<keyword id="KW-0704">Schiff base</keyword>
<keyword id="KW-0808">Transferase</keyword>
<dbReference type="EC" id="2.2.1.2" evidence="2"/>
<dbReference type="EMBL" id="CP000553">
    <property type="protein sequence ID" value="ABM75138.1"/>
    <property type="molecule type" value="Genomic_DNA"/>
</dbReference>
<dbReference type="RefSeq" id="WP_011823313.1">
    <property type="nucleotide sequence ID" value="NC_008819.1"/>
</dbReference>
<dbReference type="SMR" id="A2C0X8"/>
<dbReference type="KEGG" id="pme:NATL1_05761"/>
<dbReference type="eggNOG" id="COG0176">
    <property type="taxonomic scope" value="Bacteria"/>
</dbReference>
<dbReference type="HOGENOM" id="CLU_047470_0_1_3"/>
<dbReference type="UniPathway" id="UPA00115">
    <property type="reaction ID" value="UER00414"/>
</dbReference>
<dbReference type="Proteomes" id="UP000002592">
    <property type="component" value="Chromosome"/>
</dbReference>
<dbReference type="GO" id="GO:0005737">
    <property type="term" value="C:cytoplasm"/>
    <property type="evidence" value="ECO:0007669"/>
    <property type="project" value="UniProtKB-SubCell"/>
</dbReference>
<dbReference type="GO" id="GO:0004801">
    <property type="term" value="F:transaldolase activity"/>
    <property type="evidence" value="ECO:0000250"/>
    <property type="project" value="UniProtKB"/>
</dbReference>
<dbReference type="GO" id="GO:0005975">
    <property type="term" value="P:carbohydrate metabolic process"/>
    <property type="evidence" value="ECO:0007669"/>
    <property type="project" value="InterPro"/>
</dbReference>
<dbReference type="GO" id="GO:0006098">
    <property type="term" value="P:pentose-phosphate shunt"/>
    <property type="evidence" value="ECO:0007669"/>
    <property type="project" value="UniProtKB-UniRule"/>
</dbReference>
<dbReference type="CDD" id="cd00957">
    <property type="entry name" value="Transaldolase_TalAB"/>
    <property type="match status" value="1"/>
</dbReference>
<dbReference type="FunFam" id="3.20.20.70:FF:000002">
    <property type="entry name" value="Transaldolase"/>
    <property type="match status" value="1"/>
</dbReference>
<dbReference type="Gene3D" id="3.20.20.70">
    <property type="entry name" value="Aldolase class I"/>
    <property type="match status" value="1"/>
</dbReference>
<dbReference type="HAMAP" id="MF_00492">
    <property type="entry name" value="Transaldolase_1"/>
    <property type="match status" value="1"/>
</dbReference>
<dbReference type="InterPro" id="IPR013785">
    <property type="entry name" value="Aldolase_TIM"/>
</dbReference>
<dbReference type="InterPro" id="IPR001585">
    <property type="entry name" value="TAL/FSA"/>
</dbReference>
<dbReference type="InterPro" id="IPR004730">
    <property type="entry name" value="Transaldolase_1"/>
</dbReference>
<dbReference type="InterPro" id="IPR018225">
    <property type="entry name" value="Transaldolase_AS"/>
</dbReference>
<dbReference type="NCBIfam" id="NF008965">
    <property type="entry name" value="PRK12309.1"/>
    <property type="match status" value="1"/>
</dbReference>
<dbReference type="NCBIfam" id="TIGR00874">
    <property type="entry name" value="talAB"/>
    <property type="match status" value="1"/>
</dbReference>
<dbReference type="PANTHER" id="PTHR10683">
    <property type="entry name" value="TRANSALDOLASE"/>
    <property type="match status" value="1"/>
</dbReference>
<dbReference type="PANTHER" id="PTHR10683:SF18">
    <property type="entry name" value="TRANSALDOLASE"/>
    <property type="match status" value="1"/>
</dbReference>
<dbReference type="Pfam" id="PF00923">
    <property type="entry name" value="TAL_FSA"/>
    <property type="match status" value="1"/>
</dbReference>
<dbReference type="SUPFAM" id="SSF51569">
    <property type="entry name" value="Aldolase"/>
    <property type="match status" value="1"/>
</dbReference>
<dbReference type="PROSITE" id="PS01054">
    <property type="entry name" value="TRANSALDOLASE_1"/>
    <property type="match status" value="1"/>
</dbReference>
<dbReference type="PROSITE" id="PS00958">
    <property type="entry name" value="TRANSALDOLASE_2"/>
    <property type="match status" value="1"/>
</dbReference>
<accession>A2C0X8</accession>
<evidence type="ECO:0000250" key="1"/>
<evidence type="ECO:0000255" key="2">
    <source>
        <dbReference type="HAMAP-Rule" id="MF_00492"/>
    </source>
</evidence>
<protein>
    <recommendedName>
        <fullName evidence="2">Transaldolase</fullName>
        <ecNumber evidence="2">2.2.1.2</ecNumber>
    </recommendedName>
</protein>
<comment type="function">
    <text evidence="2">Transaldolase is important for the balance of metabolites in the pentose-phosphate pathway.</text>
</comment>
<comment type="catalytic activity">
    <reaction evidence="2">
        <text>D-sedoheptulose 7-phosphate + D-glyceraldehyde 3-phosphate = D-erythrose 4-phosphate + beta-D-fructose 6-phosphate</text>
        <dbReference type="Rhea" id="RHEA:17053"/>
        <dbReference type="ChEBI" id="CHEBI:16897"/>
        <dbReference type="ChEBI" id="CHEBI:57483"/>
        <dbReference type="ChEBI" id="CHEBI:57634"/>
        <dbReference type="ChEBI" id="CHEBI:59776"/>
        <dbReference type="EC" id="2.2.1.2"/>
    </reaction>
</comment>
<comment type="pathway">
    <text evidence="2">Carbohydrate degradation; pentose phosphate pathway; D-glyceraldehyde 3-phosphate and beta-D-fructose 6-phosphate from D-ribose 5-phosphate and D-xylulose 5-phosphate (non-oxidative stage): step 2/3.</text>
</comment>
<comment type="subunit">
    <text evidence="1">Homodimer.</text>
</comment>
<comment type="subcellular location">
    <subcellularLocation>
        <location evidence="2">Cytoplasm</location>
    </subcellularLocation>
</comment>
<comment type="similarity">
    <text evidence="2">Belongs to the transaldolase family. Type 1 subfamily.</text>
</comment>